<feature type="chain" id="PRO_0000104888" description="Large ribosomal subunit protein uL15B/uL15D">
    <location>
        <begin position="1"/>
        <end position="149"/>
    </location>
</feature>
<feature type="region of interest" description="Disordered" evidence="3">
    <location>
        <begin position="21"/>
        <end position="40"/>
    </location>
</feature>
<dbReference type="EMBL" id="AK419086">
    <property type="protein sequence ID" value="BAN37803.1"/>
    <property type="molecule type" value="mRNA"/>
</dbReference>
<dbReference type="EMBL" id="AK420511">
    <property type="protein sequence ID" value="BAN39119.1"/>
    <property type="molecule type" value="mRNA"/>
</dbReference>
<dbReference type="EMBL" id="AJ311622">
    <property type="protein sequence ID" value="CAC34300.1"/>
    <property type="molecule type" value="Genomic_DNA"/>
</dbReference>
<dbReference type="EMBL" id="AJ409108">
    <property type="protein sequence ID" value="CAC34074.1"/>
    <property type="molecule type" value="Genomic_DNA"/>
</dbReference>
<dbReference type="EMBL" id="DS571219">
    <property type="protein sequence ID" value="EDS89502.1"/>
    <property type="molecule type" value="Genomic_DNA"/>
</dbReference>
<dbReference type="RefSeq" id="XP_001913724.1">
    <property type="nucleotide sequence ID" value="XM_001913689.1"/>
</dbReference>
<dbReference type="RefSeq" id="XP_650888.1">
    <property type="nucleotide sequence ID" value="XM_645796.2"/>
</dbReference>
<dbReference type="SMR" id="Q9BH80"/>
<dbReference type="STRING" id="5759.B1N3F8"/>
<dbReference type="EnsemblProtists" id="GAT93126">
    <property type="protein sequence ID" value="GAT93126"/>
    <property type="gene ID" value="CL6EHI_069490"/>
</dbReference>
<dbReference type="EnsemblProtists" id="GAT95326">
    <property type="protein sequence ID" value="GAT95326"/>
    <property type="gene ID" value="CL6EHI_169100"/>
</dbReference>
<dbReference type="EnsemblProtists" id="rna_EHI_069490-1">
    <property type="protein sequence ID" value="rna_EHI_069490-1"/>
    <property type="gene ID" value="EHI_069490"/>
</dbReference>
<dbReference type="EnsemblProtists" id="rna_EHI_169100-1">
    <property type="protein sequence ID" value="rna_EHI_169100-1"/>
    <property type="gene ID" value="EHI_169100"/>
</dbReference>
<dbReference type="GeneID" id="6219693"/>
<dbReference type="KEGG" id="ehi:EHI_069490"/>
<dbReference type="KEGG" id="ehi:EHI_169100"/>
<dbReference type="VEuPathDB" id="AmoebaDB:EHI5A_109550"/>
<dbReference type="VEuPathDB" id="AmoebaDB:EHI_069490"/>
<dbReference type="VEuPathDB" id="AmoebaDB:EHI_169100"/>
<dbReference type="VEuPathDB" id="AmoebaDB:KM1_295400"/>
<dbReference type="HOGENOM" id="CLU_109163_1_0_1"/>
<dbReference type="OMA" id="HYARNKY"/>
<dbReference type="OrthoDB" id="61900at2759"/>
<dbReference type="Proteomes" id="UP000001926">
    <property type="component" value="Partially assembled WGS sequence"/>
</dbReference>
<dbReference type="GO" id="GO:0022625">
    <property type="term" value="C:cytosolic large ribosomal subunit"/>
    <property type="evidence" value="ECO:0000318"/>
    <property type="project" value="GO_Central"/>
</dbReference>
<dbReference type="GO" id="GO:0005783">
    <property type="term" value="C:endoplasmic reticulum"/>
    <property type="evidence" value="ECO:0007669"/>
    <property type="project" value="UniProtKB-SubCell"/>
</dbReference>
<dbReference type="GO" id="GO:0003735">
    <property type="term" value="F:structural constituent of ribosome"/>
    <property type="evidence" value="ECO:0000318"/>
    <property type="project" value="GO_Central"/>
</dbReference>
<dbReference type="GO" id="GO:0006412">
    <property type="term" value="P:translation"/>
    <property type="evidence" value="ECO:0007669"/>
    <property type="project" value="InterPro"/>
</dbReference>
<dbReference type="FunFam" id="3.100.10.10:FF:000002">
    <property type="entry name" value="60S ribosomal protein L27a"/>
    <property type="match status" value="1"/>
</dbReference>
<dbReference type="Gene3D" id="3.100.10.10">
    <property type="match status" value="1"/>
</dbReference>
<dbReference type="HAMAP" id="MF_01341">
    <property type="entry name" value="Ribosomal_uL15"/>
    <property type="match status" value="1"/>
</dbReference>
<dbReference type="InterPro" id="IPR030878">
    <property type="entry name" value="Ribosomal_uL15"/>
</dbReference>
<dbReference type="InterPro" id="IPR021131">
    <property type="entry name" value="Ribosomal_uL15/eL18"/>
</dbReference>
<dbReference type="InterPro" id="IPR036227">
    <property type="entry name" value="Ribosomal_uL15/eL18_sf"/>
</dbReference>
<dbReference type="InterPro" id="IPR001196">
    <property type="entry name" value="Ribosomal_uL15_CS"/>
</dbReference>
<dbReference type="PANTHER" id="PTHR11721">
    <property type="entry name" value="60S RIBOSOMAL PROTEIN L27A"/>
    <property type="match status" value="1"/>
</dbReference>
<dbReference type="PANTHER" id="PTHR11721:SF3">
    <property type="entry name" value="LARGE RIBOSOMAL SUBUNIT PROTEIN UL15"/>
    <property type="match status" value="1"/>
</dbReference>
<dbReference type="Pfam" id="PF00828">
    <property type="entry name" value="Ribosomal_L27A"/>
    <property type="match status" value="1"/>
</dbReference>
<dbReference type="SUPFAM" id="SSF52080">
    <property type="entry name" value="Ribosomal proteins L15p and L18e"/>
    <property type="match status" value="1"/>
</dbReference>
<dbReference type="PROSITE" id="PS00475">
    <property type="entry name" value="RIBOSOMAL_L15"/>
    <property type="match status" value="1"/>
</dbReference>
<protein>
    <recommendedName>
        <fullName evidence="4">Large ribosomal subunit protein uL15B/uL15D</fullName>
    </recommendedName>
    <alternativeName>
        <fullName>60S ribosomal protein L27a-2/4</fullName>
    </alternativeName>
</protein>
<sequence length="149" mass="17005">MATRFRQTRRRRGHVSMGYGRIGKHRKQRGGRGNAGGQHHRKTWFTTFHPDYFGKHGMRVFHLKANKYYCPSINVDSLWSLVGKDVQAQYKNAKVGEEVPVIDCVKHGYFKVLGKGFLPKQPVIVRARYFSEKAQQKIKAVGGACELTA</sequence>
<organism>
    <name type="scientific">Entamoeba histolytica (strain ATCC 30459 / HM-1:IMSS / ABRM)</name>
    <dbReference type="NCBI Taxonomy" id="294381"/>
    <lineage>
        <taxon>Eukaryota</taxon>
        <taxon>Amoebozoa</taxon>
        <taxon>Evosea</taxon>
        <taxon>Archamoebae</taxon>
        <taxon>Mastigamoebida</taxon>
        <taxon>Entamoebidae</taxon>
        <taxon>Entamoeba</taxon>
    </lineage>
</organism>
<comment type="function">
    <text evidence="2">Component of the large ribosomal subunit. The ribosome is a large ribonucleoprotein complex responsible for the synthesis of proteins in the cell.</text>
</comment>
<comment type="subunit">
    <text evidence="2">Component of the large ribosomal subunit.</text>
</comment>
<comment type="subcellular location">
    <subcellularLocation>
        <location evidence="2">Cytoplasm</location>
        <location evidence="2">Cytosol</location>
    </subcellularLocation>
    <subcellularLocation>
        <location evidence="2">Cytoplasm</location>
    </subcellularLocation>
    <subcellularLocation>
        <location evidence="1">Endoplasmic reticulum</location>
    </subcellularLocation>
</comment>
<comment type="similarity">
    <text evidence="4">Belongs to the universal ribosomal protein uL15 family.</text>
</comment>
<proteinExistence type="evidence at transcript level"/>
<evidence type="ECO:0000250" key="1">
    <source>
        <dbReference type="UniProtKB" id="A1XQU5"/>
    </source>
</evidence>
<evidence type="ECO:0000250" key="2">
    <source>
        <dbReference type="UniProtKB" id="P61353"/>
    </source>
</evidence>
<evidence type="ECO:0000256" key="3">
    <source>
        <dbReference type="SAM" id="MobiDB-lite"/>
    </source>
</evidence>
<evidence type="ECO:0000305" key="4"/>
<evidence type="ECO:0000312" key="5">
    <source>
        <dbReference type="EMBL" id="BAN39119.1"/>
    </source>
</evidence>
<evidence type="ECO:0000312" key="6">
    <source>
        <dbReference type="EMBL" id="CAC34074.1"/>
    </source>
</evidence>
<evidence type="ECO:0000312" key="7">
    <source>
        <dbReference type="EMBL" id="CAC34300.1"/>
    </source>
</evidence>
<evidence type="ECO:0000312" key="8">
    <source>
        <dbReference type="EMBL" id="EDS89502.1"/>
    </source>
</evidence>
<gene>
    <name type="primary">rpl27a-2</name>
    <name evidence="8" type="ORF">EHI_169100</name>
</gene>
<gene>
    <name type="primary">rpl27a-4</name>
</gene>
<reference evidence="5" key="1">
    <citation type="submission" date="2012-06" db="EMBL/GenBank/DDBJ databases">
        <title>Short 5' UTR of Entamoeba genes.</title>
        <authorList>
            <person name="Hiranuka K."/>
            <person name="Kumagai M."/>
            <person name="Wakaguri H."/>
            <person name="Suzuki Y."/>
            <person name="Sugano S."/>
            <person name="Watanabe J."/>
            <person name="Makioka A."/>
        </authorList>
    </citation>
    <scope>NUCLEOTIDE SEQUENCE [MRNA]</scope>
    <source>
        <strain evidence="5">ATCC 30459 / HM-1:IMSS / ABRM</strain>
    </source>
</reference>
<reference evidence="6 7" key="2">
    <citation type="journal article" date="2001" name="Protist">
        <title>Introns of Entamoeba histolytica and Entamoeba dispar.</title>
        <authorList>
            <person name="Willhoeft U."/>
            <person name="Campos-Gongora E."/>
            <person name="Touzni S."/>
            <person name="Bruchhaus I."/>
            <person name="Tannich E."/>
        </authorList>
    </citation>
    <scope>NUCLEOTIDE SEQUENCE [GENOMIC DNA]</scope>
    <source>
        <strain evidence="6 7">ATCC 30459 / HM-1:IMSS / ABRM</strain>
    </source>
</reference>
<reference evidence="8" key="3">
    <citation type="journal article" date="2005" name="Nature">
        <title>The genome of the protist parasite Entamoeba histolytica.</title>
        <authorList>
            <person name="Loftus B.J."/>
            <person name="Anderson I."/>
            <person name="Davies R."/>
            <person name="Alsmark U.C."/>
            <person name="Samuelson J."/>
            <person name="Amedeo P."/>
            <person name="Roncaglia P."/>
            <person name="Berriman M."/>
            <person name="Hirt R.P."/>
            <person name="Mann B.J."/>
            <person name="Nozaki T."/>
            <person name="Suh B."/>
            <person name="Pop M."/>
            <person name="Duchene M."/>
            <person name="Ackers J."/>
            <person name="Tannich E."/>
            <person name="Leippe M."/>
            <person name="Hofer M."/>
            <person name="Bruchhaus I."/>
            <person name="Willhoeft U."/>
            <person name="Bhattacharya A."/>
            <person name="Chillingworth T."/>
            <person name="Churcher C.M."/>
            <person name="Hance Z."/>
            <person name="Harris B."/>
            <person name="Harris D."/>
            <person name="Jagels K."/>
            <person name="Moule S."/>
            <person name="Mungall K.L."/>
            <person name="Ormond D."/>
            <person name="Squares R."/>
            <person name="Whitehead S."/>
            <person name="Quail M.A."/>
            <person name="Rabbinowitsch E."/>
            <person name="Norbertczak H."/>
            <person name="Price C."/>
            <person name="Wang Z."/>
            <person name="Guillen N."/>
            <person name="Gilchrist C."/>
            <person name="Stroup S.E."/>
            <person name="Bhattacharya S."/>
            <person name="Lohia A."/>
            <person name="Foster P.G."/>
            <person name="Sicheritz-Ponten T."/>
            <person name="Weber C."/>
            <person name="Singh U."/>
            <person name="Mukherjee C."/>
            <person name="El-Sayed N.M.A."/>
            <person name="Petri W.A."/>
            <person name="Clark C.G."/>
            <person name="Embley T.M."/>
            <person name="Barrell B.G."/>
            <person name="Fraser C.M."/>
            <person name="Hall N."/>
        </authorList>
    </citation>
    <scope>NUCLEOTIDE SEQUENCE [LARGE SCALE GENOMIC DNA]</scope>
    <source>
        <strain evidence="8">ATCC 30459 / HM-1:IMSS / ABRM</strain>
    </source>
</reference>
<keyword id="KW-0963">Cytoplasm</keyword>
<keyword id="KW-0256">Endoplasmic reticulum</keyword>
<keyword id="KW-1185">Reference proteome</keyword>
<keyword id="KW-0687">Ribonucleoprotein</keyword>
<keyword id="KW-0689">Ribosomal protein</keyword>
<name>R27A2_ENTH1</name>
<accession>Q9BH80</accession>
<accession>A0A175JI28</accession>
<accession>B1N3F8</accession>
<accession>S0AWC5</accession>